<comment type="function">
    <text evidence="1">Bifunctional serine/threonine kinase and phosphorylase involved in the regulation of the pyruvate, phosphate dikinase (PPDK) by catalyzing its phosphorylation/dephosphorylation.</text>
</comment>
<comment type="catalytic activity">
    <reaction evidence="1">
        <text>N(tele)-phospho-L-histidyl/L-threonyl-[pyruvate, phosphate dikinase] + ADP = N(tele)-phospho-L-histidyl/O-phospho-L-threonyl-[pyruvate, phosphate dikinase] + AMP + H(+)</text>
        <dbReference type="Rhea" id="RHEA:43692"/>
        <dbReference type="Rhea" id="RHEA-COMP:10650"/>
        <dbReference type="Rhea" id="RHEA-COMP:10651"/>
        <dbReference type="ChEBI" id="CHEBI:15378"/>
        <dbReference type="ChEBI" id="CHEBI:30013"/>
        <dbReference type="ChEBI" id="CHEBI:61977"/>
        <dbReference type="ChEBI" id="CHEBI:83586"/>
        <dbReference type="ChEBI" id="CHEBI:456215"/>
        <dbReference type="ChEBI" id="CHEBI:456216"/>
        <dbReference type="EC" id="2.7.11.32"/>
    </reaction>
</comment>
<comment type="catalytic activity">
    <reaction evidence="1">
        <text>N(tele)-phospho-L-histidyl/O-phospho-L-threonyl-[pyruvate, phosphate dikinase] + phosphate + H(+) = N(tele)-phospho-L-histidyl/L-threonyl-[pyruvate, phosphate dikinase] + diphosphate</text>
        <dbReference type="Rhea" id="RHEA:43696"/>
        <dbReference type="Rhea" id="RHEA-COMP:10650"/>
        <dbReference type="Rhea" id="RHEA-COMP:10651"/>
        <dbReference type="ChEBI" id="CHEBI:15378"/>
        <dbReference type="ChEBI" id="CHEBI:30013"/>
        <dbReference type="ChEBI" id="CHEBI:33019"/>
        <dbReference type="ChEBI" id="CHEBI:43474"/>
        <dbReference type="ChEBI" id="CHEBI:61977"/>
        <dbReference type="ChEBI" id="CHEBI:83586"/>
        <dbReference type="EC" id="2.7.4.27"/>
    </reaction>
</comment>
<comment type="similarity">
    <text evidence="1">Belongs to the pyruvate, phosphate/water dikinase regulatory protein family. PDRP subfamily.</text>
</comment>
<organism>
    <name type="scientific">Pelagibacter ubique (strain HTCC1062)</name>
    <dbReference type="NCBI Taxonomy" id="335992"/>
    <lineage>
        <taxon>Bacteria</taxon>
        <taxon>Pseudomonadati</taxon>
        <taxon>Pseudomonadota</taxon>
        <taxon>Alphaproteobacteria</taxon>
        <taxon>Candidatus Pelagibacterales</taxon>
        <taxon>Candidatus Pelagibacteraceae</taxon>
        <taxon>Candidatus Pelagibacter</taxon>
    </lineage>
</organism>
<feature type="chain" id="PRO_0000196683" description="Putative pyruvate, phosphate dikinase regulatory protein">
    <location>
        <begin position="1"/>
        <end position="274"/>
    </location>
</feature>
<feature type="binding site" evidence="1">
    <location>
        <begin position="151"/>
        <end position="158"/>
    </location>
    <ligand>
        <name>ADP</name>
        <dbReference type="ChEBI" id="CHEBI:456216"/>
    </ligand>
</feature>
<reference key="1">
    <citation type="journal article" date="2005" name="Science">
        <title>Genome streamlining in a cosmopolitan oceanic bacterium.</title>
        <authorList>
            <person name="Giovannoni S.J."/>
            <person name="Tripp H.J."/>
            <person name="Givan S."/>
            <person name="Podar M."/>
            <person name="Vergin K.L."/>
            <person name="Baptista D."/>
            <person name="Bibbs L."/>
            <person name="Eads J."/>
            <person name="Richardson T.H."/>
            <person name="Noordewier M."/>
            <person name="Rappe M.S."/>
            <person name="Short J.M."/>
            <person name="Carrington J.C."/>
            <person name="Mathur E.J."/>
        </authorList>
    </citation>
    <scope>NUCLEOTIDE SEQUENCE [LARGE SCALE GENOMIC DNA]</scope>
    <source>
        <strain>HTCC1062</strain>
    </source>
</reference>
<keyword id="KW-0418">Kinase</keyword>
<keyword id="KW-0547">Nucleotide-binding</keyword>
<keyword id="KW-1185">Reference proteome</keyword>
<keyword id="KW-0723">Serine/threonine-protein kinase</keyword>
<keyword id="KW-0808">Transferase</keyword>
<accession>Q4FNS3</accession>
<gene>
    <name type="ordered locus">SAR11_0343</name>
</gene>
<evidence type="ECO:0000255" key="1">
    <source>
        <dbReference type="HAMAP-Rule" id="MF_00921"/>
    </source>
</evidence>
<proteinExistence type="inferred from homology"/>
<sequence>MSNTYQIYLISDSTGETLDRVFLAIKAQFKNIKYDVKSYFFTRTENQVSKIMDEAKKNDNAIILYTIVDTSLAKFLANKGDEKKIPCFSVLGNLIMNFSKLLNQKASHVPSGQHALNEEYYERIEAIQFTMAHDDGNLVEDVDKADLILLGVSRTSKTPTSIYLANRGYKTLNIPLVNEQSIPESLKKNPKLSCVVGLTTEPQRLVDIRKNRMNALKEKENTNYTNINKIEKEINEAKKTFIKYKWPTIDVTRKSVEETAASIIKIYEINKNNG</sequence>
<name>PDRP_PELUB</name>
<dbReference type="EC" id="2.7.11.32" evidence="1"/>
<dbReference type="EC" id="2.7.4.27" evidence="1"/>
<dbReference type="EMBL" id="CP000084">
    <property type="protein sequence ID" value="AAZ21166.1"/>
    <property type="molecule type" value="Genomic_DNA"/>
</dbReference>
<dbReference type="RefSeq" id="WP_006997564.1">
    <property type="nucleotide sequence ID" value="NC_007205.1"/>
</dbReference>
<dbReference type="SMR" id="Q4FNS3"/>
<dbReference type="STRING" id="335992.SAR11_0343"/>
<dbReference type="GeneID" id="66294842"/>
<dbReference type="KEGG" id="pub:SAR11_0343"/>
<dbReference type="eggNOG" id="COG1806">
    <property type="taxonomic scope" value="Bacteria"/>
</dbReference>
<dbReference type="HOGENOM" id="CLU_046206_2_0_5"/>
<dbReference type="OrthoDB" id="9782201at2"/>
<dbReference type="Proteomes" id="UP000002528">
    <property type="component" value="Chromosome"/>
</dbReference>
<dbReference type="GO" id="GO:0043531">
    <property type="term" value="F:ADP binding"/>
    <property type="evidence" value="ECO:0007669"/>
    <property type="project" value="UniProtKB-UniRule"/>
</dbReference>
<dbReference type="GO" id="GO:0005524">
    <property type="term" value="F:ATP binding"/>
    <property type="evidence" value="ECO:0007669"/>
    <property type="project" value="InterPro"/>
</dbReference>
<dbReference type="GO" id="GO:0016776">
    <property type="term" value="F:phosphotransferase activity, phosphate group as acceptor"/>
    <property type="evidence" value="ECO:0007669"/>
    <property type="project" value="UniProtKB-UniRule"/>
</dbReference>
<dbReference type="GO" id="GO:0004674">
    <property type="term" value="F:protein serine/threonine kinase activity"/>
    <property type="evidence" value="ECO:0007669"/>
    <property type="project" value="UniProtKB-UniRule"/>
</dbReference>
<dbReference type="HAMAP" id="MF_00921">
    <property type="entry name" value="PDRP"/>
    <property type="match status" value="1"/>
</dbReference>
<dbReference type="InterPro" id="IPR005177">
    <property type="entry name" value="Kinase-pyrophosphorylase"/>
</dbReference>
<dbReference type="InterPro" id="IPR026565">
    <property type="entry name" value="PPDK_reg"/>
</dbReference>
<dbReference type="NCBIfam" id="NF003742">
    <property type="entry name" value="PRK05339.1"/>
    <property type="match status" value="1"/>
</dbReference>
<dbReference type="PANTHER" id="PTHR31756">
    <property type="entry name" value="PYRUVATE, PHOSPHATE DIKINASE REGULATORY PROTEIN 1, CHLOROPLASTIC"/>
    <property type="match status" value="1"/>
</dbReference>
<dbReference type="PANTHER" id="PTHR31756:SF3">
    <property type="entry name" value="PYRUVATE, PHOSPHATE DIKINASE REGULATORY PROTEIN 1, CHLOROPLASTIC"/>
    <property type="match status" value="1"/>
</dbReference>
<dbReference type="Pfam" id="PF03618">
    <property type="entry name" value="Kinase-PPPase"/>
    <property type="match status" value="1"/>
</dbReference>
<protein>
    <recommendedName>
        <fullName evidence="1">Putative pyruvate, phosphate dikinase regulatory protein</fullName>
        <shortName evidence="1">PPDK regulatory protein</shortName>
        <ecNumber evidence="1">2.7.11.32</ecNumber>
        <ecNumber evidence="1">2.7.4.27</ecNumber>
    </recommendedName>
</protein>